<evidence type="ECO:0000255" key="1">
    <source>
        <dbReference type="HAMAP-Rule" id="MF_00501"/>
    </source>
</evidence>
<evidence type="ECO:0000305" key="2"/>
<accession>Q0SGN7</accession>
<gene>
    <name evidence="1" type="primary">rpmE</name>
    <name type="ordered locus">RHA1_ro01484</name>
</gene>
<protein>
    <recommendedName>
        <fullName evidence="1">Large ribosomal subunit protein bL31</fullName>
    </recommendedName>
    <alternativeName>
        <fullName evidence="2">50S ribosomal protein L31</fullName>
    </alternativeName>
</protein>
<dbReference type="EMBL" id="CP000431">
    <property type="protein sequence ID" value="ABG93299.1"/>
    <property type="molecule type" value="Genomic_DNA"/>
</dbReference>
<dbReference type="RefSeq" id="WP_005252948.1">
    <property type="nucleotide sequence ID" value="NC_008268.1"/>
</dbReference>
<dbReference type="SMR" id="Q0SGN7"/>
<dbReference type="GeneID" id="69893157"/>
<dbReference type="KEGG" id="rha:RHA1_ro01484"/>
<dbReference type="eggNOG" id="COG0254">
    <property type="taxonomic scope" value="Bacteria"/>
</dbReference>
<dbReference type="HOGENOM" id="CLU_114306_4_0_11"/>
<dbReference type="OrthoDB" id="9803251at2"/>
<dbReference type="Proteomes" id="UP000008710">
    <property type="component" value="Chromosome"/>
</dbReference>
<dbReference type="GO" id="GO:1990904">
    <property type="term" value="C:ribonucleoprotein complex"/>
    <property type="evidence" value="ECO:0007669"/>
    <property type="project" value="UniProtKB-KW"/>
</dbReference>
<dbReference type="GO" id="GO:0005840">
    <property type="term" value="C:ribosome"/>
    <property type="evidence" value="ECO:0007669"/>
    <property type="project" value="UniProtKB-KW"/>
</dbReference>
<dbReference type="GO" id="GO:0046872">
    <property type="term" value="F:metal ion binding"/>
    <property type="evidence" value="ECO:0007669"/>
    <property type="project" value="UniProtKB-KW"/>
</dbReference>
<dbReference type="GO" id="GO:0019843">
    <property type="term" value="F:rRNA binding"/>
    <property type="evidence" value="ECO:0007669"/>
    <property type="project" value="UniProtKB-KW"/>
</dbReference>
<dbReference type="GO" id="GO:0003735">
    <property type="term" value="F:structural constituent of ribosome"/>
    <property type="evidence" value="ECO:0007669"/>
    <property type="project" value="InterPro"/>
</dbReference>
<dbReference type="GO" id="GO:0006412">
    <property type="term" value="P:translation"/>
    <property type="evidence" value="ECO:0007669"/>
    <property type="project" value="UniProtKB-UniRule"/>
</dbReference>
<dbReference type="Gene3D" id="4.10.830.30">
    <property type="entry name" value="Ribosomal protein L31"/>
    <property type="match status" value="1"/>
</dbReference>
<dbReference type="HAMAP" id="MF_00501">
    <property type="entry name" value="Ribosomal_bL31_1"/>
    <property type="match status" value="1"/>
</dbReference>
<dbReference type="InterPro" id="IPR034704">
    <property type="entry name" value="Ribosomal_bL28/bL31-like_sf"/>
</dbReference>
<dbReference type="InterPro" id="IPR002150">
    <property type="entry name" value="Ribosomal_bL31"/>
</dbReference>
<dbReference type="InterPro" id="IPR027491">
    <property type="entry name" value="Ribosomal_bL31_A"/>
</dbReference>
<dbReference type="InterPro" id="IPR042105">
    <property type="entry name" value="Ribosomal_bL31_sf"/>
</dbReference>
<dbReference type="NCBIfam" id="TIGR00105">
    <property type="entry name" value="L31"/>
    <property type="match status" value="1"/>
</dbReference>
<dbReference type="NCBIfam" id="NF000612">
    <property type="entry name" value="PRK00019.1"/>
    <property type="match status" value="1"/>
</dbReference>
<dbReference type="NCBIfam" id="NF001809">
    <property type="entry name" value="PRK00528.1"/>
    <property type="match status" value="1"/>
</dbReference>
<dbReference type="PANTHER" id="PTHR33280">
    <property type="entry name" value="50S RIBOSOMAL PROTEIN L31, CHLOROPLASTIC"/>
    <property type="match status" value="1"/>
</dbReference>
<dbReference type="PANTHER" id="PTHR33280:SF1">
    <property type="entry name" value="LARGE RIBOSOMAL SUBUNIT PROTEIN BL31C"/>
    <property type="match status" value="1"/>
</dbReference>
<dbReference type="Pfam" id="PF01197">
    <property type="entry name" value="Ribosomal_L31"/>
    <property type="match status" value="1"/>
</dbReference>
<dbReference type="PRINTS" id="PR01249">
    <property type="entry name" value="RIBOSOMALL31"/>
</dbReference>
<dbReference type="SUPFAM" id="SSF143800">
    <property type="entry name" value="L28p-like"/>
    <property type="match status" value="1"/>
</dbReference>
<dbReference type="PROSITE" id="PS01143">
    <property type="entry name" value="RIBOSOMAL_L31"/>
    <property type="match status" value="1"/>
</dbReference>
<comment type="function">
    <text evidence="1">Binds the 23S rRNA.</text>
</comment>
<comment type="cofactor">
    <cofactor evidence="1">
        <name>Zn(2+)</name>
        <dbReference type="ChEBI" id="CHEBI:29105"/>
    </cofactor>
    <text evidence="1">Binds 1 zinc ion per subunit.</text>
</comment>
<comment type="subunit">
    <text evidence="1">Part of the 50S ribosomal subunit.</text>
</comment>
<comment type="similarity">
    <text evidence="1">Belongs to the bacterial ribosomal protein bL31 family. Type A subfamily.</text>
</comment>
<keyword id="KW-0479">Metal-binding</keyword>
<keyword id="KW-0687">Ribonucleoprotein</keyword>
<keyword id="KW-0689">Ribosomal protein</keyword>
<keyword id="KW-0694">RNA-binding</keyword>
<keyword id="KW-0699">rRNA-binding</keyword>
<keyword id="KW-0862">Zinc</keyword>
<feature type="chain" id="PRO_0000259217" description="Large ribosomal subunit protein bL31">
    <location>
        <begin position="1"/>
        <end position="80"/>
    </location>
</feature>
<feature type="binding site" evidence="1">
    <location>
        <position position="16"/>
    </location>
    <ligand>
        <name>Zn(2+)</name>
        <dbReference type="ChEBI" id="CHEBI:29105"/>
    </ligand>
</feature>
<feature type="binding site" evidence="1">
    <location>
        <position position="18"/>
    </location>
    <ligand>
        <name>Zn(2+)</name>
        <dbReference type="ChEBI" id="CHEBI:29105"/>
    </ligand>
</feature>
<feature type="binding site" evidence="1">
    <location>
        <position position="38"/>
    </location>
    <ligand>
        <name>Zn(2+)</name>
        <dbReference type="ChEBI" id="CHEBI:29105"/>
    </ligand>
</feature>
<feature type="binding site" evidence="1">
    <location>
        <position position="41"/>
    </location>
    <ligand>
        <name>Zn(2+)</name>
        <dbReference type="ChEBI" id="CHEBI:29105"/>
    </ligand>
</feature>
<reference key="1">
    <citation type="journal article" date="2006" name="Proc. Natl. Acad. Sci. U.S.A.">
        <title>The complete genome of Rhodococcus sp. RHA1 provides insights into a catabolic powerhouse.</title>
        <authorList>
            <person name="McLeod M.P."/>
            <person name="Warren R.L."/>
            <person name="Hsiao W.W.L."/>
            <person name="Araki N."/>
            <person name="Myhre M."/>
            <person name="Fernandes C."/>
            <person name="Miyazawa D."/>
            <person name="Wong W."/>
            <person name="Lillquist A.L."/>
            <person name="Wang D."/>
            <person name="Dosanjh M."/>
            <person name="Hara H."/>
            <person name="Petrescu A."/>
            <person name="Morin R.D."/>
            <person name="Yang G."/>
            <person name="Stott J.M."/>
            <person name="Schein J.E."/>
            <person name="Shin H."/>
            <person name="Smailus D."/>
            <person name="Siddiqui A.S."/>
            <person name="Marra M.A."/>
            <person name="Jones S.J.M."/>
            <person name="Holt R."/>
            <person name="Brinkman F.S.L."/>
            <person name="Miyauchi K."/>
            <person name="Fukuda M."/>
            <person name="Davies J.E."/>
            <person name="Mohn W.W."/>
            <person name="Eltis L.D."/>
        </authorList>
    </citation>
    <scope>NUCLEOTIDE SEQUENCE [LARGE SCALE GENOMIC DNA]</scope>
    <source>
        <strain>RHA1</strain>
    </source>
</reference>
<sequence>MKSGIHPNYVATTVVCGCGNTFETHSTKETGRINVEVCSQCHPFYTGKQKILDTGGRVARFEARYGKRAGKGAAKESAES</sequence>
<proteinExistence type="inferred from homology"/>
<name>RL31_RHOJR</name>
<organism>
    <name type="scientific">Rhodococcus jostii (strain RHA1)</name>
    <dbReference type="NCBI Taxonomy" id="101510"/>
    <lineage>
        <taxon>Bacteria</taxon>
        <taxon>Bacillati</taxon>
        <taxon>Actinomycetota</taxon>
        <taxon>Actinomycetes</taxon>
        <taxon>Mycobacteriales</taxon>
        <taxon>Nocardiaceae</taxon>
        <taxon>Rhodococcus</taxon>
    </lineage>
</organism>